<evidence type="ECO:0000255" key="1">
    <source>
        <dbReference type="HAMAP-Rule" id="MF_00208"/>
    </source>
</evidence>
<evidence type="ECO:0000305" key="2"/>
<sequence>MTLQGKPYRLSDLIKQTGVRLTDCSNQFSDRFVSGITQIAQSVERDDIFVAFQGKTRHGVEFLDQVQSCAAVLTDNKGRHIMQSDCLPTRSTPILVTDSPRSDLIVLAKRVYPIDDIRIFGITGTNGKTSTMHIAAKLLEMMGISCGISTTIGSSASESDSCLTTPELCQLYARIFTAKQARADFFALEASSHAINRGRLGDIVLEVAAFTNLTPEHMEEHKNMEAYYQAKKALFLNKRSNSAVINIDTPYGIRLFKETGCSASVISENTKYGLDHKLFWQASVRRVGLSFGFTLISPSGYRVESSISLLGKAFALNTCMAIVILCNLGIDIERIDSVLRKAGGLKMVLPGRMEVFQTGNSPRVIVDHGHTVDAVETALVAAKSITRGRLITIINADGQRDPSKRKHLGQLCGAYSDKLFITDGHSRFENPAEIRRMILDGVEGPRRQVEQIPSMTQAVLAAIDIARSDDTVLCSGFGDDPYLDVLGKKIPYSLRDEVRRGLERFAQGT</sequence>
<gene>
    <name evidence="1" type="primary">murE</name>
    <name type="ordered locus">TWT_225</name>
</gene>
<comment type="function">
    <text evidence="1">Catalyzes the addition of an amino acid to the nucleotide precursor UDP-N-acetylmuramoyl-L-alanyl-D-glutamate (UMAG) in the biosynthesis of bacterial cell-wall peptidoglycan.</text>
</comment>
<comment type="pathway">
    <text evidence="1">Cell wall biogenesis; peptidoglycan biosynthesis.</text>
</comment>
<comment type="subcellular location">
    <subcellularLocation>
        <location evidence="1">Cytoplasm</location>
    </subcellularLocation>
</comment>
<comment type="PTM">
    <text evidence="1">Carboxylation is probably crucial for Mg(2+) binding and, consequently, for the gamma-phosphate positioning of ATP.</text>
</comment>
<comment type="similarity">
    <text evidence="1">Belongs to the MurCDEF family. MurE subfamily.</text>
</comment>
<comment type="sequence caution" evidence="2">
    <conflict type="erroneous initiation">
        <sequence resource="EMBL-CDS" id="AAO44322"/>
    </conflict>
</comment>
<organism>
    <name type="scientific">Tropheryma whipplei (strain Twist)</name>
    <name type="common">Whipple's bacillus</name>
    <dbReference type="NCBI Taxonomy" id="203267"/>
    <lineage>
        <taxon>Bacteria</taxon>
        <taxon>Bacillati</taxon>
        <taxon>Actinomycetota</taxon>
        <taxon>Actinomycetes</taxon>
        <taxon>Micrococcales</taxon>
        <taxon>Tropherymataceae</taxon>
        <taxon>Tropheryma</taxon>
    </lineage>
</organism>
<feature type="chain" id="PRO_0000101966" description="UDP-N-acetylmuramyl-tripeptide synthetase">
    <location>
        <begin position="1"/>
        <end position="509"/>
    </location>
</feature>
<feature type="binding site" evidence="1">
    <location>
        <begin position="124"/>
        <end position="130"/>
    </location>
    <ligand>
        <name>ATP</name>
        <dbReference type="ChEBI" id="CHEBI:30616"/>
    </ligand>
</feature>
<feature type="binding site" evidence="1">
    <location>
        <begin position="164"/>
        <end position="165"/>
    </location>
    <ligand>
        <name>UDP-N-acetyl-alpha-D-muramoyl-L-alanyl-D-glutamate</name>
        <dbReference type="ChEBI" id="CHEBI:83900"/>
    </ligand>
</feature>
<feature type="binding site" evidence="1">
    <location>
        <position position="191"/>
    </location>
    <ligand>
        <name>UDP-N-acetyl-alpha-D-muramoyl-L-alanyl-D-glutamate</name>
        <dbReference type="ChEBI" id="CHEBI:83900"/>
    </ligand>
</feature>
<feature type="binding site" evidence="1">
    <location>
        <position position="199"/>
    </location>
    <ligand>
        <name>UDP-N-acetyl-alpha-D-muramoyl-L-alanyl-D-glutamate</name>
        <dbReference type="ChEBI" id="CHEBI:83900"/>
    </ligand>
</feature>
<feature type="modified residue" description="N6-carboxylysine" evidence="1">
    <location>
        <position position="231"/>
    </location>
</feature>
<reference key="1">
    <citation type="journal article" date="2003" name="Genome Res.">
        <title>Tropheryma whipplei twist: a human pathogenic Actinobacteria with a reduced genome.</title>
        <authorList>
            <person name="Raoult D."/>
            <person name="Ogata H."/>
            <person name="Audic S."/>
            <person name="Robert C."/>
            <person name="Suhre K."/>
            <person name="Drancourt M."/>
            <person name="Claverie J.-M."/>
        </authorList>
    </citation>
    <scope>NUCLEOTIDE SEQUENCE [LARGE SCALE GENOMIC DNA]</scope>
    <source>
        <strain>Twist</strain>
    </source>
</reference>
<proteinExistence type="inferred from homology"/>
<protein>
    <recommendedName>
        <fullName evidence="1">UDP-N-acetylmuramyl-tripeptide synthetase</fullName>
        <ecNumber evidence="1">6.3.2.-</ecNumber>
    </recommendedName>
    <alternativeName>
        <fullName evidence="1">UDP-MurNAc-tripeptide synthetase</fullName>
    </alternativeName>
</protein>
<accession>Q83GN3</accession>
<dbReference type="EC" id="6.3.2.-" evidence="1"/>
<dbReference type="EMBL" id="AE014184">
    <property type="protein sequence ID" value="AAO44322.1"/>
    <property type="status" value="ALT_INIT"/>
    <property type="molecule type" value="Genomic_DNA"/>
</dbReference>
<dbReference type="RefSeq" id="WP_038105327.1">
    <property type="nucleotide sequence ID" value="NC_004572.3"/>
</dbReference>
<dbReference type="SMR" id="Q83GN3"/>
<dbReference type="STRING" id="203267.TWT_225"/>
<dbReference type="KEGG" id="twh:TWT_225"/>
<dbReference type="eggNOG" id="COG0769">
    <property type="taxonomic scope" value="Bacteria"/>
</dbReference>
<dbReference type="HOGENOM" id="CLU_022291_4_1_11"/>
<dbReference type="OrthoDB" id="9800958at2"/>
<dbReference type="UniPathway" id="UPA00219"/>
<dbReference type="Proteomes" id="UP000002200">
    <property type="component" value="Chromosome"/>
</dbReference>
<dbReference type="GO" id="GO:0005737">
    <property type="term" value="C:cytoplasm"/>
    <property type="evidence" value="ECO:0007669"/>
    <property type="project" value="UniProtKB-SubCell"/>
</dbReference>
<dbReference type="GO" id="GO:0016881">
    <property type="term" value="F:acid-amino acid ligase activity"/>
    <property type="evidence" value="ECO:0007669"/>
    <property type="project" value="UniProtKB-UniRule"/>
</dbReference>
<dbReference type="GO" id="GO:0005524">
    <property type="term" value="F:ATP binding"/>
    <property type="evidence" value="ECO:0007669"/>
    <property type="project" value="UniProtKB-UniRule"/>
</dbReference>
<dbReference type="GO" id="GO:0000287">
    <property type="term" value="F:magnesium ion binding"/>
    <property type="evidence" value="ECO:0007669"/>
    <property type="project" value="UniProtKB-UniRule"/>
</dbReference>
<dbReference type="GO" id="GO:0051301">
    <property type="term" value="P:cell division"/>
    <property type="evidence" value="ECO:0007669"/>
    <property type="project" value="UniProtKB-KW"/>
</dbReference>
<dbReference type="GO" id="GO:0071555">
    <property type="term" value="P:cell wall organization"/>
    <property type="evidence" value="ECO:0007669"/>
    <property type="project" value="UniProtKB-KW"/>
</dbReference>
<dbReference type="GO" id="GO:0009252">
    <property type="term" value="P:peptidoglycan biosynthetic process"/>
    <property type="evidence" value="ECO:0007669"/>
    <property type="project" value="UniProtKB-UniRule"/>
</dbReference>
<dbReference type="GO" id="GO:0008360">
    <property type="term" value="P:regulation of cell shape"/>
    <property type="evidence" value="ECO:0007669"/>
    <property type="project" value="UniProtKB-KW"/>
</dbReference>
<dbReference type="Gene3D" id="3.90.190.20">
    <property type="entry name" value="Mur ligase, C-terminal domain"/>
    <property type="match status" value="1"/>
</dbReference>
<dbReference type="Gene3D" id="3.40.1190.10">
    <property type="entry name" value="Mur-like, catalytic domain"/>
    <property type="match status" value="1"/>
</dbReference>
<dbReference type="Gene3D" id="3.40.1390.10">
    <property type="entry name" value="MurE/MurF, N-terminal domain"/>
    <property type="match status" value="1"/>
</dbReference>
<dbReference type="HAMAP" id="MF_00208">
    <property type="entry name" value="MurE"/>
    <property type="match status" value="1"/>
</dbReference>
<dbReference type="InterPro" id="IPR036565">
    <property type="entry name" value="Mur-like_cat_sf"/>
</dbReference>
<dbReference type="InterPro" id="IPR004101">
    <property type="entry name" value="Mur_ligase_C"/>
</dbReference>
<dbReference type="InterPro" id="IPR036615">
    <property type="entry name" value="Mur_ligase_C_dom_sf"/>
</dbReference>
<dbReference type="InterPro" id="IPR013221">
    <property type="entry name" value="Mur_ligase_cen"/>
</dbReference>
<dbReference type="InterPro" id="IPR035911">
    <property type="entry name" value="MurE/MurF_N"/>
</dbReference>
<dbReference type="InterPro" id="IPR005761">
    <property type="entry name" value="UDP-N-AcMur-Glu-dNH2Pim_ligase"/>
</dbReference>
<dbReference type="NCBIfam" id="TIGR01085">
    <property type="entry name" value="murE"/>
    <property type="match status" value="1"/>
</dbReference>
<dbReference type="PANTHER" id="PTHR23135">
    <property type="entry name" value="MUR LIGASE FAMILY MEMBER"/>
    <property type="match status" value="1"/>
</dbReference>
<dbReference type="PANTHER" id="PTHR23135:SF4">
    <property type="entry name" value="UDP-N-ACETYLMURAMOYL-L-ALANYL-D-GLUTAMATE--2,6-DIAMINOPIMELATE LIGASE MURE HOMOLOG, CHLOROPLASTIC"/>
    <property type="match status" value="1"/>
</dbReference>
<dbReference type="Pfam" id="PF02875">
    <property type="entry name" value="Mur_ligase_C"/>
    <property type="match status" value="1"/>
</dbReference>
<dbReference type="Pfam" id="PF08245">
    <property type="entry name" value="Mur_ligase_M"/>
    <property type="match status" value="1"/>
</dbReference>
<dbReference type="SUPFAM" id="SSF53623">
    <property type="entry name" value="MurD-like peptide ligases, catalytic domain"/>
    <property type="match status" value="1"/>
</dbReference>
<dbReference type="SUPFAM" id="SSF53244">
    <property type="entry name" value="MurD-like peptide ligases, peptide-binding domain"/>
    <property type="match status" value="1"/>
</dbReference>
<dbReference type="SUPFAM" id="SSF63418">
    <property type="entry name" value="MurE/MurF N-terminal domain"/>
    <property type="match status" value="1"/>
</dbReference>
<name>MURE_TROWT</name>
<keyword id="KW-0067">ATP-binding</keyword>
<keyword id="KW-0131">Cell cycle</keyword>
<keyword id="KW-0132">Cell division</keyword>
<keyword id="KW-0133">Cell shape</keyword>
<keyword id="KW-0961">Cell wall biogenesis/degradation</keyword>
<keyword id="KW-0963">Cytoplasm</keyword>
<keyword id="KW-0436">Ligase</keyword>
<keyword id="KW-0547">Nucleotide-binding</keyword>
<keyword id="KW-0573">Peptidoglycan synthesis</keyword>
<keyword id="KW-1185">Reference proteome</keyword>